<keyword id="KW-0244">Early protein</keyword>
<dbReference type="EMBL" id="AY261363">
    <property type="status" value="NOT_ANNOTATED_CDS"/>
    <property type="molecule type" value="Genomic_DNA"/>
</dbReference>
<dbReference type="Proteomes" id="UP000000859">
    <property type="component" value="Segment"/>
</dbReference>
<evidence type="ECO:0000250" key="1">
    <source>
        <dbReference type="UniProtKB" id="Q65175"/>
    </source>
</evidence>
<evidence type="ECO:0000305" key="2"/>
<feature type="chain" id="PRO_0000373622" description="Putative TATA-binding protein pB263R">
    <location>
        <begin position="1"/>
        <end position="263"/>
    </location>
</feature>
<comment type="function">
    <text evidence="1">Putative TATA-binding protein.</text>
</comment>
<comment type="induction">
    <text evidence="2">Expressed in the early phase of the viral replicative cycle.</text>
</comment>
<comment type="domain">
    <text evidence="1">Possibly contains a TATA-binding domain.</text>
</comment>
<comment type="similarity">
    <text evidence="2">Belongs to the asfivirus B263R family.</text>
</comment>
<reference key="1">
    <citation type="submission" date="2003-03" db="EMBL/GenBank/DDBJ databases">
        <title>African swine fever virus genomes.</title>
        <authorList>
            <person name="Kutish G.F."/>
            <person name="Rock D.L."/>
        </authorList>
    </citation>
    <scope>NUCLEOTIDE SEQUENCE [GENOMIC DNA]</scope>
</reference>
<proteinExistence type="inferred from homology"/>
<organismHost>
    <name type="scientific">Ornithodoros</name>
    <name type="common">relapsing fever ticks</name>
    <dbReference type="NCBI Taxonomy" id="6937"/>
</organismHost>
<organismHost>
    <name type="scientific">Phacochoerus aethiopicus</name>
    <name type="common">Warthog</name>
    <dbReference type="NCBI Taxonomy" id="85517"/>
</organismHost>
<organismHost>
    <name type="scientific">Phacochoerus africanus</name>
    <name type="common">Warthog</name>
    <dbReference type="NCBI Taxonomy" id="41426"/>
</organismHost>
<organismHost>
    <name type="scientific">Potamochoerus larvatus</name>
    <name type="common">Bushpig</name>
    <dbReference type="NCBI Taxonomy" id="273792"/>
</organismHost>
<organismHost>
    <name type="scientific">Sus scrofa</name>
    <name type="common">Pig</name>
    <dbReference type="NCBI Taxonomy" id="9823"/>
</organismHost>
<gene>
    <name type="ordered locus">Pret-098</name>
</gene>
<name>TBP_ASFP4</name>
<organism>
    <name type="scientific">African swine fever virus (isolate Tick/South Africa/Pretoriuskop Pr4/1996)</name>
    <name type="common">ASFV</name>
    <dbReference type="NCBI Taxonomy" id="561443"/>
    <lineage>
        <taxon>Viruses</taxon>
        <taxon>Varidnaviria</taxon>
        <taxon>Bamfordvirae</taxon>
        <taxon>Nucleocytoviricota</taxon>
        <taxon>Pokkesviricetes</taxon>
        <taxon>Asfuvirales</taxon>
        <taxon>Asfarviridae</taxon>
        <taxon>Asfivirus</taxon>
        <taxon>African swine fever virus</taxon>
    </lineage>
</organism>
<accession>P0CAC3</accession>
<sequence>MEDETELCFRSNKVTRLEMFVCTYGGKISSLACSHMELIKILQIAEPVKALNCNFGHQCLPGYESLIKTPKKTKNMLRRPRKTEGDGTCFNSAIEASILFKDKMYKLKCFPSTGEIQVPGVIFPDFEDGKNIIQQWVDFLQHQPIEKKIQIIEFKTIMINFKFQINPVSPRVIIHLKKFAALLEHIPTPYPIREIKPPLEDSKVSAKFMVSPGKKVRINVFLKGKINILGCNTKESAETIYTFLKDLISVHWQEILCVLPMPD</sequence>
<protein>
    <recommendedName>
        <fullName evidence="1">Putative TATA-binding protein pB263R</fullName>
        <shortName evidence="1">TBP</shortName>
    </recommendedName>
</protein>